<keyword id="KW-0028">Amino-acid biosynthesis</keyword>
<keyword id="KW-0057">Aromatic amino acid biosynthesis</keyword>
<keyword id="KW-0170">Cobalt</keyword>
<keyword id="KW-0963">Cytoplasm</keyword>
<keyword id="KW-0456">Lyase</keyword>
<keyword id="KW-0479">Metal-binding</keyword>
<keyword id="KW-0520">NAD</keyword>
<keyword id="KW-0547">Nucleotide-binding</keyword>
<keyword id="KW-0862">Zinc</keyword>
<gene>
    <name evidence="1" type="primary">aroB</name>
    <name type="ordered locus">BT9727_1399</name>
</gene>
<comment type="function">
    <text evidence="1">Catalyzes the conversion of 3-deoxy-D-arabino-heptulosonate 7-phosphate (DAHP) to dehydroquinate (DHQ).</text>
</comment>
<comment type="catalytic activity">
    <reaction evidence="1">
        <text>7-phospho-2-dehydro-3-deoxy-D-arabino-heptonate = 3-dehydroquinate + phosphate</text>
        <dbReference type="Rhea" id="RHEA:21968"/>
        <dbReference type="ChEBI" id="CHEBI:32364"/>
        <dbReference type="ChEBI" id="CHEBI:43474"/>
        <dbReference type="ChEBI" id="CHEBI:58394"/>
        <dbReference type="EC" id="4.2.3.4"/>
    </reaction>
</comment>
<comment type="cofactor">
    <cofactor evidence="1">
        <name>Co(2+)</name>
        <dbReference type="ChEBI" id="CHEBI:48828"/>
    </cofactor>
    <cofactor evidence="1">
        <name>Zn(2+)</name>
        <dbReference type="ChEBI" id="CHEBI:29105"/>
    </cofactor>
    <text evidence="1">Binds 1 divalent metal cation per subunit. Can use either Co(2+) or Zn(2+).</text>
</comment>
<comment type="cofactor">
    <cofactor evidence="1">
        <name>NAD(+)</name>
        <dbReference type="ChEBI" id="CHEBI:57540"/>
    </cofactor>
</comment>
<comment type="pathway">
    <text evidence="1">Metabolic intermediate biosynthesis; chorismate biosynthesis; chorismate from D-erythrose 4-phosphate and phosphoenolpyruvate: step 2/7.</text>
</comment>
<comment type="subcellular location">
    <subcellularLocation>
        <location evidence="1">Cytoplasm</location>
    </subcellularLocation>
</comment>
<comment type="similarity">
    <text evidence="1">Belongs to the sugar phosphate cyclases superfamily. Dehydroquinate synthase family.</text>
</comment>
<feature type="chain" id="PRO_0000231067" description="3-dehydroquinate synthase">
    <location>
        <begin position="1"/>
        <end position="363"/>
    </location>
</feature>
<feature type="binding site" evidence="1">
    <location>
        <begin position="72"/>
        <end position="77"/>
    </location>
    <ligand>
        <name>NAD(+)</name>
        <dbReference type="ChEBI" id="CHEBI:57540"/>
    </ligand>
</feature>
<feature type="binding site" evidence="1">
    <location>
        <begin position="130"/>
        <end position="131"/>
    </location>
    <ligand>
        <name>NAD(+)</name>
        <dbReference type="ChEBI" id="CHEBI:57540"/>
    </ligand>
</feature>
<feature type="binding site" evidence="1">
    <location>
        <position position="142"/>
    </location>
    <ligand>
        <name>NAD(+)</name>
        <dbReference type="ChEBI" id="CHEBI:57540"/>
    </ligand>
</feature>
<feature type="binding site" evidence="1">
    <location>
        <position position="151"/>
    </location>
    <ligand>
        <name>NAD(+)</name>
        <dbReference type="ChEBI" id="CHEBI:57540"/>
    </ligand>
</feature>
<feature type="binding site" evidence="1">
    <location>
        <position position="184"/>
    </location>
    <ligand>
        <name>Zn(2+)</name>
        <dbReference type="ChEBI" id="CHEBI:29105"/>
    </ligand>
</feature>
<feature type="binding site" evidence="1">
    <location>
        <position position="247"/>
    </location>
    <ligand>
        <name>Zn(2+)</name>
        <dbReference type="ChEBI" id="CHEBI:29105"/>
    </ligand>
</feature>
<feature type="binding site" evidence="1">
    <location>
        <position position="264"/>
    </location>
    <ligand>
        <name>Zn(2+)</name>
        <dbReference type="ChEBI" id="CHEBI:29105"/>
    </ligand>
</feature>
<evidence type="ECO:0000255" key="1">
    <source>
        <dbReference type="HAMAP-Rule" id="MF_00110"/>
    </source>
</evidence>
<organism>
    <name type="scientific">Bacillus thuringiensis subsp. konkukian (strain 97-27)</name>
    <dbReference type="NCBI Taxonomy" id="281309"/>
    <lineage>
        <taxon>Bacteria</taxon>
        <taxon>Bacillati</taxon>
        <taxon>Bacillota</taxon>
        <taxon>Bacilli</taxon>
        <taxon>Bacillales</taxon>
        <taxon>Bacillaceae</taxon>
        <taxon>Bacillus</taxon>
        <taxon>Bacillus cereus group</taxon>
    </lineage>
</organism>
<name>AROB_BACHK</name>
<sequence length="363" mass="40246">MGNIHIQTKSKEYDVYVGKESLSHLTTIVQNMQPAVSNIMIISDEAVASLHLQTVVDALQIDQKVFSFVVPSGEKEKSFENFYAAHTSALENKLDRNSLIVALGGGMIGDLAGFVAASFMRGIRFVQVPTTLLAHDSAVGGKVAINHPLGKNMIGAFHQPEAVVYHTPFLQSLPEKEWRSGYAEVIKHALIGDVKLYHWLKEEVQTLADLRDEKLIHILTKAIPVKANIVAQDETEKGVRAHLNFGHTLGHALEKELGYGNITHGDGVAVGMLFAIFLSEQVYKVNLAYEEMKQWFLKYGYPKMPSDLSVERLVGLMKQDKKANAGTIHMVLMQEYGVVNVVSIPDETVHIALEAFQKDMVEK</sequence>
<proteinExistence type="inferred from homology"/>
<protein>
    <recommendedName>
        <fullName evidence="1">3-dehydroquinate synthase</fullName>
        <shortName evidence="1">DHQS</shortName>
        <ecNumber evidence="1">4.2.3.4</ecNumber>
    </recommendedName>
</protein>
<dbReference type="EC" id="4.2.3.4" evidence="1"/>
<dbReference type="EMBL" id="AE017355">
    <property type="protein sequence ID" value="AAT63216.1"/>
    <property type="molecule type" value="Genomic_DNA"/>
</dbReference>
<dbReference type="RefSeq" id="WP_000526827.1">
    <property type="nucleotide sequence ID" value="NC_005957.1"/>
</dbReference>
<dbReference type="RefSeq" id="YP_035733.1">
    <property type="nucleotide sequence ID" value="NC_005957.1"/>
</dbReference>
<dbReference type="SMR" id="Q6HL38"/>
<dbReference type="KEGG" id="btk:BT9727_1399"/>
<dbReference type="PATRIC" id="fig|281309.8.peg.1471"/>
<dbReference type="HOGENOM" id="CLU_001201_0_2_9"/>
<dbReference type="UniPathway" id="UPA00053">
    <property type="reaction ID" value="UER00085"/>
</dbReference>
<dbReference type="Proteomes" id="UP000001301">
    <property type="component" value="Chromosome"/>
</dbReference>
<dbReference type="GO" id="GO:0005737">
    <property type="term" value="C:cytoplasm"/>
    <property type="evidence" value="ECO:0007669"/>
    <property type="project" value="UniProtKB-SubCell"/>
</dbReference>
<dbReference type="GO" id="GO:0003856">
    <property type="term" value="F:3-dehydroquinate synthase activity"/>
    <property type="evidence" value="ECO:0007669"/>
    <property type="project" value="UniProtKB-UniRule"/>
</dbReference>
<dbReference type="GO" id="GO:0046872">
    <property type="term" value="F:metal ion binding"/>
    <property type="evidence" value="ECO:0007669"/>
    <property type="project" value="UniProtKB-KW"/>
</dbReference>
<dbReference type="GO" id="GO:0000166">
    <property type="term" value="F:nucleotide binding"/>
    <property type="evidence" value="ECO:0007669"/>
    <property type="project" value="UniProtKB-KW"/>
</dbReference>
<dbReference type="GO" id="GO:0008652">
    <property type="term" value="P:amino acid biosynthetic process"/>
    <property type="evidence" value="ECO:0007669"/>
    <property type="project" value="UniProtKB-KW"/>
</dbReference>
<dbReference type="GO" id="GO:0009073">
    <property type="term" value="P:aromatic amino acid family biosynthetic process"/>
    <property type="evidence" value="ECO:0007669"/>
    <property type="project" value="UniProtKB-KW"/>
</dbReference>
<dbReference type="GO" id="GO:0009423">
    <property type="term" value="P:chorismate biosynthetic process"/>
    <property type="evidence" value="ECO:0007669"/>
    <property type="project" value="UniProtKB-UniRule"/>
</dbReference>
<dbReference type="CDD" id="cd08195">
    <property type="entry name" value="DHQS"/>
    <property type="match status" value="1"/>
</dbReference>
<dbReference type="FunFam" id="1.20.1090.10:FF:000008">
    <property type="entry name" value="3-dehydroquinate synthase"/>
    <property type="match status" value="1"/>
</dbReference>
<dbReference type="FunFam" id="3.40.50.1970:FF:000001">
    <property type="entry name" value="3-dehydroquinate synthase"/>
    <property type="match status" value="1"/>
</dbReference>
<dbReference type="Gene3D" id="3.40.50.1970">
    <property type="match status" value="1"/>
</dbReference>
<dbReference type="Gene3D" id="1.20.1090.10">
    <property type="entry name" value="Dehydroquinate synthase-like - alpha domain"/>
    <property type="match status" value="1"/>
</dbReference>
<dbReference type="HAMAP" id="MF_00110">
    <property type="entry name" value="DHQ_synthase"/>
    <property type="match status" value="1"/>
</dbReference>
<dbReference type="InterPro" id="IPR050071">
    <property type="entry name" value="Dehydroquinate_synthase"/>
</dbReference>
<dbReference type="InterPro" id="IPR016037">
    <property type="entry name" value="DHQ_synth_AroB"/>
</dbReference>
<dbReference type="InterPro" id="IPR030963">
    <property type="entry name" value="DHQ_synth_fam"/>
</dbReference>
<dbReference type="InterPro" id="IPR030960">
    <property type="entry name" value="DHQS/DOIS_N"/>
</dbReference>
<dbReference type="InterPro" id="IPR056179">
    <property type="entry name" value="DHQS_C"/>
</dbReference>
<dbReference type="NCBIfam" id="TIGR01357">
    <property type="entry name" value="aroB"/>
    <property type="match status" value="1"/>
</dbReference>
<dbReference type="PANTHER" id="PTHR43622">
    <property type="entry name" value="3-DEHYDROQUINATE SYNTHASE"/>
    <property type="match status" value="1"/>
</dbReference>
<dbReference type="PANTHER" id="PTHR43622:SF7">
    <property type="entry name" value="3-DEHYDROQUINATE SYNTHASE, CHLOROPLASTIC"/>
    <property type="match status" value="1"/>
</dbReference>
<dbReference type="Pfam" id="PF01761">
    <property type="entry name" value="DHQ_synthase"/>
    <property type="match status" value="1"/>
</dbReference>
<dbReference type="Pfam" id="PF24621">
    <property type="entry name" value="DHQS_C"/>
    <property type="match status" value="1"/>
</dbReference>
<dbReference type="PIRSF" id="PIRSF001455">
    <property type="entry name" value="DHQ_synth"/>
    <property type="match status" value="1"/>
</dbReference>
<dbReference type="SUPFAM" id="SSF56796">
    <property type="entry name" value="Dehydroquinate synthase-like"/>
    <property type="match status" value="1"/>
</dbReference>
<accession>Q6HL38</accession>
<reference key="1">
    <citation type="journal article" date="2006" name="J. Bacteriol.">
        <title>Pathogenomic sequence analysis of Bacillus cereus and Bacillus thuringiensis isolates closely related to Bacillus anthracis.</title>
        <authorList>
            <person name="Han C.S."/>
            <person name="Xie G."/>
            <person name="Challacombe J.F."/>
            <person name="Altherr M.R."/>
            <person name="Bhotika S.S."/>
            <person name="Bruce D."/>
            <person name="Campbell C.S."/>
            <person name="Campbell M.L."/>
            <person name="Chen J."/>
            <person name="Chertkov O."/>
            <person name="Cleland C."/>
            <person name="Dimitrijevic M."/>
            <person name="Doggett N.A."/>
            <person name="Fawcett J.J."/>
            <person name="Glavina T."/>
            <person name="Goodwin L.A."/>
            <person name="Hill K.K."/>
            <person name="Hitchcock P."/>
            <person name="Jackson P.J."/>
            <person name="Keim P."/>
            <person name="Kewalramani A.R."/>
            <person name="Longmire J."/>
            <person name="Lucas S."/>
            <person name="Malfatti S."/>
            <person name="McMurry K."/>
            <person name="Meincke L.J."/>
            <person name="Misra M."/>
            <person name="Moseman B.L."/>
            <person name="Mundt M."/>
            <person name="Munk A.C."/>
            <person name="Okinaka R.T."/>
            <person name="Parson-Quintana B."/>
            <person name="Reilly L.P."/>
            <person name="Richardson P."/>
            <person name="Robinson D.L."/>
            <person name="Rubin E."/>
            <person name="Saunders E."/>
            <person name="Tapia R."/>
            <person name="Tesmer J.G."/>
            <person name="Thayer N."/>
            <person name="Thompson L.S."/>
            <person name="Tice H."/>
            <person name="Ticknor L.O."/>
            <person name="Wills P.L."/>
            <person name="Brettin T.S."/>
            <person name="Gilna P."/>
        </authorList>
    </citation>
    <scope>NUCLEOTIDE SEQUENCE [LARGE SCALE GENOMIC DNA]</scope>
    <source>
        <strain>97-27</strain>
    </source>
</reference>